<keyword id="KW-0378">Hydrolase</keyword>
<keyword id="KW-0460">Magnesium</keyword>
<keyword id="KW-0479">Metal-binding</keyword>
<keyword id="KW-0546">Nucleotide metabolism</keyword>
<keyword id="KW-1185">Reference proteome</keyword>
<name>DUT_AFIC5</name>
<protein>
    <recommendedName>
        <fullName evidence="1">Deoxyuridine 5'-triphosphate nucleotidohydrolase</fullName>
        <shortName evidence="1">dUTPase</shortName>
        <ecNumber evidence="1">3.6.1.23</ecNumber>
    </recommendedName>
    <alternativeName>
        <fullName evidence="1">dUTP pyrophosphatase</fullName>
    </alternativeName>
</protein>
<organism>
    <name type="scientific">Afipia carboxidovorans (strain ATCC 49405 / DSM 1227 / KCTC 32145 / OM5)</name>
    <name type="common">Oligotropha carboxidovorans</name>
    <dbReference type="NCBI Taxonomy" id="504832"/>
    <lineage>
        <taxon>Bacteria</taxon>
        <taxon>Pseudomonadati</taxon>
        <taxon>Pseudomonadota</taxon>
        <taxon>Alphaproteobacteria</taxon>
        <taxon>Hyphomicrobiales</taxon>
        <taxon>Nitrobacteraceae</taxon>
        <taxon>Afipia</taxon>
    </lineage>
</organism>
<proteinExistence type="inferred from homology"/>
<sequence>MTEPLRIAVTQLPHGQGLPLPAYQTEHAAGLDLLAAVPEDKPLAIAPGERALVPTGLAIALPAGYEAQVRPRSGLAVKHGVTVLNAPGTIDADYRGEIGVPLINHGRETFIIRRGERIAQMVVAPVVQIAFEPVAELPMSARGAGGFGSTGR</sequence>
<dbReference type="EC" id="3.6.1.23" evidence="1"/>
<dbReference type="EMBL" id="CP001196">
    <property type="protein sequence ID" value="ACI91633.1"/>
    <property type="molecule type" value="Genomic_DNA"/>
</dbReference>
<dbReference type="EMBL" id="CP002826">
    <property type="protein sequence ID" value="AEI04780.1"/>
    <property type="molecule type" value="Genomic_DNA"/>
</dbReference>
<dbReference type="RefSeq" id="WP_012561664.1">
    <property type="nucleotide sequence ID" value="NC_015684.1"/>
</dbReference>
<dbReference type="SMR" id="B6JCQ3"/>
<dbReference type="STRING" id="504832.OCA5_c00460"/>
<dbReference type="KEGG" id="oca:OCAR_4488"/>
<dbReference type="KEGG" id="ocg:OCA5_c00460"/>
<dbReference type="PATRIC" id="fig|504832.7.peg.49"/>
<dbReference type="eggNOG" id="COG0756">
    <property type="taxonomic scope" value="Bacteria"/>
</dbReference>
<dbReference type="HOGENOM" id="CLU_068508_1_2_5"/>
<dbReference type="OrthoDB" id="9809956at2"/>
<dbReference type="UniPathway" id="UPA00610">
    <property type="reaction ID" value="UER00666"/>
</dbReference>
<dbReference type="Proteomes" id="UP000007730">
    <property type="component" value="Chromosome"/>
</dbReference>
<dbReference type="GO" id="GO:0004170">
    <property type="term" value="F:dUTP diphosphatase activity"/>
    <property type="evidence" value="ECO:0007669"/>
    <property type="project" value="UniProtKB-UniRule"/>
</dbReference>
<dbReference type="GO" id="GO:0000287">
    <property type="term" value="F:magnesium ion binding"/>
    <property type="evidence" value="ECO:0007669"/>
    <property type="project" value="UniProtKB-UniRule"/>
</dbReference>
<dbReference type="GO" id="GO:0006226">
    <property type="term" value="P:dUMP biosynthetic process"/>
    <property type="evidence" value="ECO:0007669"/>
    <property type="project" value="UniProtKB-UniRule"/>
</dbReference>
<dbReference type="GO" id="GO:0046081">
    <property type="term" value="P:dUTP catabolic process"/>
    <property type="evidence" value="ECO:0007669"/>
    <property type="project" value="InterPro"/>
</dbReference>
<dbReference type="CDD" id="cd07557">
    <property type="entry name" value="trimeric_dUTPase"/>
    <property type="match status" value="1"/>
</dbReference>
<dbReference type="FunFam" id="2.70.40.10:FF:000002">
    <property type="entry name" value="dUTP diphosphatase"/>
    <property type="match status" value="1"/>
</dbReference>
<dbReference type="Gene3D" id="2.70.40.10">
    <property type="match status" value="1"/>
</dbReference>
<dbReference type="HAMAP" id="MF_00116">
    <property type="entry name" value="dUTPase_bact"/>
    <property type="match status" value="1"/>
</dbReference>
<dbReference type="InterPro" id="IPR008181">
    <property type="entry name" value="dUTPase"/>
</dbReference>
<dbReference type="InterPro" id="IPR029054">
    <property type="entry name" value="dUTPase-like"/>
</dbReference>
<dbReference type="InterPro" id="IPR036157">
    <property type="entry name" value="dUTPase-like_sf"/>
</dbReference>
<dbReference type="InterPro" id="IPR033704">
    <property type="entry name" value="dUTPase_trimeric"/>
</dbReference>
<dbReference type="NCBIfam" id="TIGR00576">
    <property type="entry name" value="dut"/>
    <property type="match status" value="1"/>
</dbReference>
<dbReference type="NCBIfam" id="NF001862">
    <property type="entry name" value="PRK00601.1"/>
    <property type="match status" value="1"/>
</dbReference>
<dbReference type="PANTHER" id="PTHR11241">
    <property type="entry name" value="DEOXYURIDINE 5'-TRIPHOSPHATE NUCLEOTIDOHYDROLASE"/>
    <property type="match status" value="1"/>
</dbReference>
<dbReference type="PANTHER" id="PTHR11241:SF0">
    <property type="entry name" value="DEOXYURIDINE 5'-TRIPHOSPHATE NUCLEOTIDOHYDROLASE"/>
    <property type="match status" value="1"/>
</dbReference>
<dbReference type="Pfam" id="PF00692">
    <property type="entry name" value="dUTPase"/>
    <property type="match status" value="1"/>
</dbReference>
<dbReference type="SUPFAM" id="SSF51283">
    <property type="entry name" value="dUTPase-like"/>
    <property type="match status" value="1"/>
</dbReference>
<gene>
    <name evidence="1" type="primary">dut</name>
    <name type="ordered locus">OCAR_4488</name>
    <name type="ordered locus">OCA5_c00460</name>
</gene>
<evidence type="ECO:0000255" key="1">
    <source>
        <dbReference type="HAMAP-Rule" id="MF_00116"/>
    </source>
</evidence>
<accession>B6JCQ3</accession>
<accession>F8C081</accession>
<reference key="1">
    <citation type="journal article" date="2008" name="J. Bacteriol.">
        <title>Genome sequence of the chemolithoautotrophic bacterium Oligotropha carboxidovorans OM5T.</title>
        <authorList>
            <person name="Paul D."/>
            <person name="Bridges S."/>
            <person name="Burgess S.C."/>
            <person name="Dandass Y."/>
            <person name="Lawrence M.L."/>
        </authorList>
    </citation>
    <scope>NUCLEOTIDE SEQUENCE [LARGE SCALE GENOMIC DNA]</scope>
    <source>
        <strain>ATCC 49405 / DSM 1227 / KCTC 32145 / OM5</strain>
    </source>
</reference>
<reference key="2">
    <citation type="journal article" date="2011" name="J. Bacteriol.">
        <title>Complete genome sequences of the chemolithoautotrophic Oligotropha carboxidovorans strains OM4 and OM5.</title>
        <authorList>
            <person name="Volland S."/>
            <person name="Rachinger M."/>
            <person name="Strittmatter A."/>
            <person name="Daniel R."/>
            <person name="Gottschalk G."/>
            <person name="Meyer O."/>
        </authorList>
    </citation>
    <scope>NUCLEOTIDE SEQUENCE [LARGE SCALE GENOMIC DNA]</scope>
    <source>
        <strain>ATCC 49405 / DSM 1227 / KCTC 32145 / OM5</strain>
    </source>
</reference>
<feature type="chain" id="PRO_1000094974" description="Deoxyuridine 5'-triphosphate nucleotidohydrolase">
    <location>
        <begin position="1"/>
        <end position="152"/>
    </location>
</feature>
<feature type="binding site" evidence="1">
    <location>
        <begin position="72"/>
        <end position="74"/>
    </location>
    <ligand>
        <name>substrate</name>
    </ligand>
</feature>
<feature type="binding site" evidence="1">
    <location>
        <position position="85"/>
    </location>
    <ligand>
        <name>substrate</name>
    </ligand>
</feature>
<feature type="binding site" evidence="1">
    <location>
        <begin position="89"/>
        <end position="91"/>
    </location>
    <ligand>
        <name>substrate</name>
    </ligand>
</feature>
<comment type="function">
    <text evidence="1">This enzyme is involved in nucleotide metabolism: it produces dUMP, the immediate precursor of thymidine nucleotides and it decreases the intracellular concentration of dUTP so that uracil cannot be incorporated into DNA.</text>
</comment>
<comment type="catalytic activity">
    <reaction evidence="1">
        <text>dUTP + H2O = dUMP + diphosphate + H(+)</text>
        <dbReference type="Rhea" id="RHEA:10248"/>
        <dbReference type="ChEBI" id="CHEBI:15377"/>
        <dbReference type="ChEBI" id="CHEBI:15378"/>
        <dbReference type="ChEBI" id="CHEBI:33019"/>
        <dbReference type="ChEBI" id="CHEBI:61555"/>
        <dbReference type="ChEBI" id="CHEBI:246422"/>
        <dbReference type="EC" id="3.6.1.23"/>
    </reaction>
</comment>
<comment type="cofactor">
    <cofactor evidence="1">
        <name>Mg(2+)</name>
        <dbReference type="ChEBI" id="CHEBI:18420"/>
    </cofactor>
</comment>
<comment type="pathway">
    <text evidence="1">Pyrimidine metabolism; dUMP biosynthesis; dUMP from dCTP (dUTP route): step 2/2.</text>
</comment>
<comment type="similarity">
    <text evidence="1">Belongs to the dUTPase family.</text>
</comment>